<evidence type="ECO:0000250" key="1">
    <source>
        <dbReference type="UniProtKB" id="O43173"/>
    </source>
</evidence>
<evidence type="ECO:0000250" key="2">
    <source>
        <dbReference type="UniProtKB" id="Q92185"/>
    </source>
</evidence>
<evidence type="ECO:0000255" key="3"/>
<evidence type="ECO:0000269" key="4">
    <source>
    </source>
</evidence>
<evidence type="ECO:0000305" key="5"/>
<evidence type="ECO:0000305" key="6">
    <source>
    </source>
</evidence>
<evidence type="ECO:0000312" key="7">
    <source>
        <dbReference type="MGI" id="MGI:106011"/>
    </source>
</evidence>
<feature type="chain" id="PRO_0000149283" description="Alpha-N-acetylneuraminide alpha-2,8-sialyltransferase">
    <location>
        <begin position="1"/>
        <end position="355"/>
    </location>
</feature>
<feature type="topological domain" description="Cytoplasmic" evidence="3">
    <location>
        <begin position="1"/>
        <end position="28"/>
    </location>
</feature>
<feature type="transmembrane region" description="Helical; Signal-anchor for type II membrane protein" evidence="3">
    <location>
        <begin position="29"/>
        <end position="47"/>
    </location>
</feature>
<feature type="topological domain" description="Lumenal" evidence="3">
    <location>
        <begin position="48"/>
        <end position="355"/>
    </location>
</feature>
<feature type="active site" description="Proton donor/acceptor" evidence="1">
    <location>
        <position position="321"/>
    </location>
</feature>
<feature type="binding site" evidence="1">
    <location>
        <position position="142"/>
    </location>
    <ligand>
        <name>CMP-N-acetyl-beta-neuraminate</name>
        <dbReference type="ChEBI" id="CHEBI:57812"/>
    </ligand>
</feature>
<feature type="binding site" evidence="1">
    <location>
        <position position="165"/>
    </location>
    <ligand>
        <name>CMP-N-acetyl-beta-neuraminate</name>
        <dbReference type="ChEBI" id="CHEBI:57812"/>
    </ligand>
</feature>
<feature type="binding site" evidence="1">
    <location>
        <position position="273"/>
    </location>
    <ligand>
        <name>CMP-N-acetyl-beta-neuraminate</name>
        <dbReference type="ChEBI" id="CHEBI:57812"/>
    </ligand>
</feature>
<feature type="binding site" evidence="1">
    <location>
        <position position="274"/>
    </location>
    <ligand>
        <name>CMP-N-acetyl-beta-neuraminate</name>
        <dbReference type="ChEBI" id="CHEBI:57812"/>
    </ligand>
</feature>
<feature type="binding site" evidence="1">
    <location>
        <position position="275"/>
    </location>
    <ligand>
        <name>CMP-N-acetyl-beta-neuraminate</name>
        <dbReference type="ChEBI" id="CHEBI:57812"/>
    </ligand>
</feature>
<feature type="binding site" evidence="1">
    <location>
        <position position="295"/>
    </location>
    <ligand>
        <name>CMP-N-acetyl-beta-neuraminate</name>
        <dbReference type="ChEBI" id="CHEBI:57812"/>
    </ligand>
</feature>
<feature type="binding site" evidence="1">
    <location>
        <position position="309"/>
    </location>
    <ligand>
        <name>CMP-N-acetyl-beta-neuraminate</name>
        <dbReference type="ChEBI" id="CHEBI:57812"/>
    </ligand>
</feature>
<feature type="glycosylation site" description="N-linked (GlcNAc...) asparagine" evidence="3">
    <location>
        <position position="70"/>
    </location>
</feature>
<feature type="glycosylation site" description="N-linked (GlcNAc...) asparagine" evidence="3">
    <location>
        <position position="118"/>
    </location>
</feature>
<feature type="glycosylation site" description="N-linked (GlcNAc...) asparagine" evidence="3">
    <location>
        <position position="213"/>
    </location>
</feature>
<feature type="glycosylation site" description="N-linked (GlcNAc...) asparagine" evidence="3">
    <location>
        <position position="244"/>
    </location>
</feature>
<feature type="disulfide bond" evidence="1">
    <location>
        <begin position="137"/>
        <end position="286"/>
    </location>
</feature>
<feature type="disulfide bond" evidence="1">
    <location>
        <begin position="151"/>
        <end position="346"/>
    </location>
</feature>
<feature type="sequence conflict" description="In Ref. 1; CAA59014." evidence="5" ref="1">
    <original>L</original>
    <variation>P</variation>
    <location>
        <position position="50"/>
    </location>
</feature>
<feature type="sequence conflict" description="In Ref. 1; CAA59014." evidence="5" ref="1">
    <original>R</original>
    <variation>S</variation>
    <location>
        <position position="64"/>
    </location>
</feature>
<feature type="sequence conflict" description="In Ref. 1; CAA59014." evidence="5" ref="1">
    <original>F</original>
    <variation>S</variation>
    <location>
        <position position="294"/>
    </location>
</feature>
<feature type="sequence conflict" description="In Ref. 1; CAA59014." evidence="5" ref="1">
    <original>S</original>
    <variation>T</variation>
    <location>
        <position position="318"/>
    </location>
</feature>
<reference key="1">
    <citation type="journal article" date="1996" name="J. Biol. Chem.">
        <title>Molecular cloning and expression of a fifth type of alpha2,8-sialyltransferase (ST8Sia V). Its substrate specificity is similar to that of SAT-V/III, which synthesize GD1c, GT1a, GQ1b and GT3.</title>
        <authorList>
            <person name="Kono M."/>
            <person name="Yoshida Y."/>
            <person name="Kojima N."/>
            <person name="Tsuji S."/>
        </authorList>
    </citation>
    <scope>NUCLEOTIDE SEQUENCE [MRNA]</scope>
    <scope>FUNCTION</scope>
    <scope>CATALYTIC ACTIVITY</scope>
    <scope>BIOPHYSICOCHEMICAL PROPERTIES</scope>
    <source>
        <tissue>Brain</tissue>
    </source>
</reference>
<reference key="2">
    <citation type="submission" date="2005-07" db="EMBL/GenBank/DDBJ databases">
        <authorList>
            <person name="Mural R.J."/>
            <person name="Adams M.D."/>
            <person name="Myers E.W."/>
            <person name="Smith H.O."/>
            <person name="Venter J.C."/>
        </authorList>
    </citation>
    <scope>NUCLEOTIDE SEQUENCE [LARGE SCALE GENOMIC DNA]</scope>
</reference>
<reference key="3">
    <citation type="journal article" date="2004" name="Genome Res.">
        <title>The status, quality, and expansion of the NIH full-length cDNA project: the Mammalian Gene Collection (MGC).</title>
        <authorList>
            <consortium name="The MGC Project Team"/>
        </authorList>
    </citation>
    <scope>NUCLEOTIDE SEQUENCE [LARGE SCALE MRNA]</scope>
    <source>
        <tissue>Eye</tissue>
    </source>
</reference>
<reference key="4">
    <citation type="journal article" date="2005" name="Glycobiology">
        <title>The animal sialyltransferases and sialyltransferase-related genes: a phylogenetic approach.</title>
        <authorList>
            <person name="Harduin-Lepers A."/>
            <person name="Mollicone R."/>
            <person name="Delannoy P."/>
            <person name="Oriol R."/>
        </authorList>
    </citation>
    <scope>IDENTIFICATION</scope>
</reference>
<reference key="5">
    <citation type="journal article" date="2010" name="Cell">
        <title>A tissue-specific atlas of mouse protein phosphorylation and expression.</title>
        <authorList>
            <person name="Huttlin E.L."/>
            <person name="Jedrychowski M.P."/>
            <person name="Elias J.E."/>
            <person name="Goswami T."/>
            <person name="Rad R."/>
            <person name="Beausoleil S.A."/>
            <person name="Villen J."/>
            <person name="Haas W."/>
            <person name="Sowa M.E."/>
            <person name="Gygi S.P."/>
        </authorList>
    </citation>
    <scope>IDENTIFICATION BY MASS SPECTROMETRY [LARGE SCALE ANALYSIS]</scope>
    <source>
        <tissue>Kidney</tissue>
    </source>
</reference>
<comment type="function">
    <text evidence="4">Catalyzes the addition of sialic acid in alpha 2,8-linkage to the sialic acid moiety of the ganglioside GM3 to form ganglioside GD3; gangliosides are a subfamily of complex glycosphingolipds that contain one or more residues of sialic acid (PubMed:8910600). Can catalyze the addition of a second alpha-2,8- sialic acid to GD3 to form GT3 (PubMed:8910600). Can use GM1b, GD1a and GT1b as acceptor substrates to synthesize GD1c, GT1a and GQ1b respectively (PubMed:8910600).</text>
</comment>
<comment type="catalytic activity">
    <reaction evidence="4">
        <text>an N-acetyl-alpha-neuraminyl-(2-&gt;3)-beta-D-galactosyl derivative + CMP-N-acetyl-beta-neuraminate = an N-acetyl-alpha-neuraminyl-(2-&gt;8)-N-acetyl-alpha-neuraminyl-(2-&gt;3)-beta-D-galactosyl derivative + CMP + H(+)</text>
        <dbReference type="Rhea" id="RHEA:19313"/>
        <dbReference type="ChEBI" id="CHEBI:15378"/>
        <dbReference type="ChEBI" id="CHEBI:57812"/>
        <dbReference type="ChEBI" id="CHEBI:60377"/>
        <dbReference type="ChEBI" id="CHEBI:140308"/>
        <dbReference type="ChEBI" id="CHEBI:140309"/>
        <dbReference type="EC" id="2.4.3.8"/>
    </reaction>
</comment>
<comment type="catalytic activity">
    <reaction evidence="4">
        <text>a ganglioside GM3 (d18:1(4E)) + CMP-N-acetyl-beta-neuraminate = a ganglioside GD3 (d18:1(4E)) + CMP + H(+)</text>
        <dbReference type="Rhea" id="RHEA:41760"/>
        <dbReference type="ChEBI" id="CHEBI:15378"/>
        <dbReference type="ChEBI" id="CHEBI:57812"/>
        <dbReference type="ChEBI" id="CHEBI:60065"/>
        <dbReference type="ChEBI" id="CHEBI:60377"/>
        <dbReference type="ChEBI" id="CHEBI:78436"/>
    </reaction>
    <physiologicalReaction direction="left-to-right" evidence="6">
        <dbReference type="Rhea" id="RHEA:41761"/>
    </physiologicalReaction>
</comment>
<comment type="catalytic activity">
    <reaction evidence="4">
        <text>a ganglioside GD3 (d18:1(4E)) + CMP-N-acetyl-beta-neuraminate = a ganglioside GT3 (d18:1(4E)) + CMP + H(+)</text>
        <dbReference type="Rhea" id="RHEA:41764"/>
        <dbReference type="ChEBI" id="CHEBI:15378"/>
        <dbReference type="ChEBI" id="CHEBI:57812"/>
        <dbReference type="ChEBI" id="CHEBI:60377"/>
        <dbReference type="ChEBI" id="CHEBI:78436"/>
        <dbReference type="ChEBI" id="CHEBI:78438"/>
    </reaction>
    <physiologicalReaction direction="left-to-right" evidence="6">
        <dbReference type="Rhea" id="RHEA:41765"/>
    </physiologicalReaction>
</comment>
<comment type="catalytic activity">
    <reaction evidence="4">
        <text>a ganglioside GD1a (d18:1(4E)) + CMP-N-acetyl-beta-neuraminate = a ganglioside GT1a (d18:1(4E)) + CMP + H(+)</text>
        <dbReference type="Rhea" id="RHEA:41768"/>
        <dbReference type="ChEBI" id="CHEBI:15378"/>
        <dbReference type="ChEBI" id="CHEBI:57812"/>
        <dbReference type="ChEBI" id="CHEBI:60377"/>
        <dbReference type="ChEBI" id="CHEBI:78445"/>
        <dbReference type="ChEBI" id="CHEBI:78447"/>
    </reaction>
    <physiologicalReaction direction="left-to-right" evidence="6">
        <dbReference type="Rhea" id="RHEA:41769"/>
    </physiologicalReaction>
</comment>
<comment type="catalytic activity">
    <reaction evidence="4">
        <text>a ganglioside GT1b (d18:1(4E)) + CMP-N-acetyl-beta-neuraminate = a ganglioside GQ1b (d18:1(4E)) + CMP + H(+)</text>
        <dbReference type="Rhea" id="RHEA:41772"/>
        <dbReference type="ChEBI" id="CHEBI:15378"/>
        <dbReference type="ChEBI" id="CHEBI:57812"/>
        <dbReference type="ChEBI" id="CHEBI:60377"/>
        <dbReference type="ChEBI" id="CHEBI:78452"/>
        <dbReference type="ChEBI" id="CHEBI:78455"/>
    </reaction>
    <physiologicalReaction direction="left-to-right" evidence="6">
        <dbReference type="Rhea" id="RHEA:41773"/>
    </physiologicalReaction>
</comment>
<comment type="catalytic activity">
    <reaction evidence="4">
        <text>a ganglioside GM1b (d18:1(4E)) + CMP-N-acetyl-beta-neuraminate = a ganglioside GD1c (d18:1(4E)) + CMP + H(+)</text>
        <dbReference type="Rhea" id="RHEA:47576"/>
        <dbReference type="ChEBI" id="CHEBI:15378"/>
        <dbReference type="ChEBI" id="CHEBI:57812"/>
        <dbReference type="ChEBI" id="CHEBI:60377"/>
        <dbReference type="ChEBI" id="CHEBI:78568"/>
        <dbReference type="ChEBI" id="CHEBI:87787"/>
    </reaction>
    <physiologicalReaction direction="left-to-right" evidence="6">
        <dbReference type="Rhea" id="RHEA:47577"/>
    </physiologicalReaction>
</comment>
<comment type="catalytic activity">
    <reaction evidence="2">
        <text>a ganglioside GD3 + CMP-N-acetyl-beta-neuraminate = a ganglioside GT3 + CMP + H(+)</text>
        <dbReference type="Rhea" id="RHEA:77295"/>
        <dbReference type="ChEBI" id="CHEBI:15378"/>
        <dbReference type="ChEBI" id="CHEBI:57812"/>
        <dbReference type="ChEBI" id="CHEBI:60377"/>
        <dbReference type="ChEBI" id="CHEBI:79214"/>
        <dbReference type="ChEBI" id="CHEBI:79216"/>
    </reaction>
    <physiologicalReaction direction="left-to-right" evidence="2">
        <dbReference type="Rhea" id="RHEA:77296"/>
    </physiologicalReaction>
</comment>
<comment type="catalytic activity">
    <reaction evidence="2">
        <text>[alpha-N-acetylneuraminyl-(2-&gt;8)](n)-alpha-N-acetylneuraminyl-(2-&gt;8)-alpha-N-acetylneuraminyl-(2-&gt;3)-beta-D-galactosyl-(1-&gt;4)-beta-D-glucosyl-(1&lt;-&gt;1)-ceramide + CMP-N-acetyl-beta-neuraminate = [alpha-N-acetylneuraminyl-(2-&gt;8)](n+1)-alpha-N-acetylneuraminyl-(2-&gt;8)-alpha-N-acetylneuraminyl-(2-&gt;3)-beta-D-galactosyl-(1-&gt;4)-beta-D-glucosyl-(1&lt;-&gt;1)-ceramide + CMP + H(+)</text>
        <dbReference type="Rhea" id="RHEA:77371"/>
        <dbReference type="Rhea" id="RHEA-COMP:18881"/>
        <dbReference type="Rhea" id="RHEA-COMP:18935"/>
        <dbReference type="ChEBI" id="CHEBI:15378"/>
        <dbReference type="ChEBI" id="CHEBI:57812"/>
        <dbReference type="ChEBI" id="CHEBI:60377"/>
        <dbReference type="ChEBI" id="CHEBI:197322"/>
    </reaction>
    <physiologicalReaction direction="left-to-right" evidence="2">
        <dbReference type="Rhea" id="RHEA:77372"/>
    </physiologicalReaction>
</comment>
<comment type="biophysicochemical properties">
    <kinetics>
        <KM evidence="4">0.03 mM for ganglioside GM3</KM>
        <KM evidence="4">5 mM for ganglioside GD3</KM>
        <KM evidence="4">5 mM for ganglioside GD1a</KM>
        <KM evidence="4">2 mM for ganglioside GT1b</KM>
    </kinetics>
</comment>
<comment type="pathway">
    <text>Protein modification; protein glycosylation.</text>
</comment>
<comment type="pathway">
    <text>Lipid metabolism; sphingolipid metabolism.</text>
</comment>
<comment type="subcellular location">
    <subcellularLocation>
        <location evidence="5">Golgi apparatus membrane</location>
        <topology evidence="5">Single-pass type II membrane protein</topology>
    </subcellularLocation>
</comment>
<comment type="similarity">
    <text evidence="5">Belongs to the glycosyltransferase 29 family.</text>
</comment>
<comment type="online information" name="Functional Glycomics Gateway - GTase">
    <link uri="http://www.functionalglycomics.org/glycomics/molecule/jsp/glycoEnzyme/viewGlycoEnzyme.jsp?gbpId=gt_mou_656"/>
    <text>ST8Sia I</text>
</comment>
<accession>Q64687</accession>
<accession>Q8K1C1</accession>
<protein>
    <recommendedName>
        <fullName evidence="5">Alpha-N-acetylneuraminide alpha-2,8-sialyltransferase</fullName>
        <ecNumber evidence="4">2.4.3.8</ecNumber>
    </recommendedName>
    <alternativeName>
        <fullName>Alpha-2,8-sialyltransferase 8A</fullName>
    </alternativeName>
    <alternativeName>
        <fullName>Ganglioside GD3 synthase</fullName>
    </alternativeName>
    <alternativeName>
        <fullName>Ganglioside GT3 synthase</fullName>
    </alternativeName>
    <alternativeName>
        <fullName>Sialyltransferase 8A</fullName>
        <shortName>SIAT8-A</shortName>
    </alternativeName>
    <alternativeName>
        <fullName>Sialyltransferase St8Sia I</fullName>
        <shortName>ST8SiaI</shortName>
    </alternativeName>
</protein>
<name>SIA8A_MOUSE</name>
<dbReference type="EC" id="2.4.3.8" evidence="4"/>
<dbReference type="EMBL" id="X84235">
    <property type="protein sequence ID" value="CAA59014.1"/>
    <property type="molecule type" value="mRNA"/>
</dbReference>
<dbReference type="EMBL" id="CH466572">
    <property type="protein sequence ID" value="EDL10653.1"/>
    <property type="molecule type" value="Genomic_DNA"/>
</dbReference>
<dbReference type="EMBL" id="BC024821">
    <property type="protein sequence ID" value="AAH24821.1"/>
    <property type="molecule type" value="mRNA"/>
</dbReference>
<dbReference type="CCDS" id="CCDS20689.1"/>
<dbReference type="RefSeq" id="NP_035504.2">
    <property type="nucleotide sequence ID" value="NM_011374.2"/>
</dbReference>
<dbReference type="SMR" id="Q64687"/>
<dbReference type="FunCoup" id="Q64687">
    <property type="interactions" value="77"/>
</dbReference>
<dbReference type="STRING" id="10090.ENSMUSP00000032421"/>
<dbReference type="CAZy" id="GT29">
    <property type="family name" value="Glycosyltransferase Family 29"/>
</dbReference>
<dbReference type="GlyConnect" id="2125">
    <property type="glycosylation" value="1 N-Linked glycan (1 site)"/>
</dbReference>
<dbReference type="GlyCosmos" id="Q64687">
    <property type="glycosylation" value="4 sites, 1 glycan"/>
</dbReference>
<dbReference type="GlyGen" id="Q64687">
    <property type="glycosylation" value="4 sites, 3 N-linked glycans (2 sites)"/>
</dbReference>
<dbReference type="iPTMnet" id="Q64687"/>
<dbReference type="PhosphoSitePlus" id="Q64687"/>
<dbReference type="SwissPalm" id="Q64687"/>
<dbReference type="PaxDb" id="10090-ENSMUSP00000032421"/>
<dbReference type="ProteomicsDB" id="257235"/>
<dbReference type="Antibodypedia" id="12441">
    <property type="antibodies" value="74 antibodies from 21 providers"/>
</dbReference>
<dbReference type="DNASU" id="20449"/>
<dbReference type="Ensembl" id="ENSMUST00000032421.4">
    <property type="protein sequence ID" value="ENSMUSP00000032421.4"/>
    <property type="gene ID" value="ENSMUSG00000030283.8"/>
</dbReference>
<dbReference type="GeneID" id="20449"/>
<dbReference type="KEGG" id="mmu:20449"/>
<dbReference type="UCSC" id="uc009epv.1">
    <property type="organism name" value="mouse"/>
</dbReference>
<dbReference type="AGR" id="MGI:106011"/>
<dbReference type="CTD" id="6489"/>
<dbReference type="MGI" id="MGI:106011">
    <property type="gene designation" value="St8sia1"/>
</dbReference>
<dbReference type="VEuPathDB" id="HostDB:ENSMUSG00000030283"/>
<dbReference type="eggNOG" id="KOG2692">
    <property type="taxonomic scope" value="Eukaryota"/>
</dbReference>
<dbReference type="GeneTree" id="ENSGT01030000234535"/>
<dbReference type="HOGENOM" id="CLU_048583_1_0_1"/>
<dbReference type="InParanoid" id="Q64687"/>
<dbReference type="OMA" id="MAGLAWK"/>
<dbReference type="OrthoDB" id="10264956at2759"/>
<dbReference type="PhylomeDB" id="Q64687"/>
<dbReference type="TreeFam" id="TF323961"/>
<dbReference type="BRENDA" id="2.4.99.8">
    <property type="organism ID" value="3474"/>
</dbReference>
<dbReference type="Reactome" id="R-MMU-4085001">
    <property type="pathway name" value="Sialic acid metabolism"/>
</dbReference>
<dbReference type="UniPathway" id="UPA00222"/>
<dbReference type="UniPathway" id="UPA00378"/>
<dbReference type="BioGRID-ORCS" id="20449">
    <property type="hits" value="1 hit in 79 CRISPR screens"/>
</dbReference>
<dbReference type="ChiTaRS" id="St8sia1">
    <property type="organism name" value="mouse"/>
</dbReference>
<dbReference type="PRO" id="PR:Q64687"/>
<dbReference type="Proteomes" id="UP000000589">
    <property type="component" value="Chromosome 6"/>
</dbReference>
<dbReference type="RNAct" id="Q64687">
    <property type="molecule type" value="protein"/>
</dbReference>
<dbReference type="Bgee" id="ENSMUSG00000030283">
    <property type="expression patterns" value="Expressed in urogenital fold and 150 other cell types or tissues"/>
</dbReference>
<dbReference type="ExpressionAtlas" id="Q64687">
    <property type="expression patterns" value="baseline and differential"/>
</dbReference>
<dbReference type="GO" id="GO:0000139">
    <property type="term" value="C:Golgi membrane"/>
    <property type="evidence" value="ECO:0007669"/>
    <property type="project" value="UniProtKB-SubCell"/>
</dbReference>
<dbReference type="GO" id="GO:0003828">
    <property type="term" value="F:alpha-N-acetylneuraminate alpha-2,8-sialyltransferase activity"/>
    <property type="evidence" value="ECO:0000250"/>
    <property type="project" value="UniProtKB"/>
</dbReference>
<dbReference type="GO" id="GO:0008283">
    <property type="term" value="P:cell population proliferation"/>
    <property type="evidence" value="ECO:0000314"/>
    <property type="project" value="MGI"/>
</dbReference>
<dbReference type="GO" id="GO:0034605">
    <property type="term" value="P:cellular response to heat"/>
    <property type="evidence" value="ECO:0000314"/>
    <property type="project" value="MGI"/>
</dbReference>
<dbReference type="GO" id="GO:0050673">
    <property type="term" value="P:epithelial cell proliferation"/>
    <property type="evidence" value="ECO:0000314"/>
    <property type="project" value="MGI"/>
</dbReference>
<dbReference type="GO" id="GO:0050679">
    <property type="term" value="P:positive regulation of epithelial cell proliferation"/>
    <property type="evidence" value="ECO:0000314"/>
    <property type="project" value="MGI"/>
</dbReference>
<dbReference type="GO" id="GO:0006486">
    <property type="term" value="P:protein glycosylation"/>
    <property type="evidence" value="ECO:0007669"/>
    <property type="project" value="UniProtKB-UniPathway"/>
</dbReference>
<dbReference type="GO" id="GO:0006665">
    <property type="term" value="P:sphingolipid metabolic process"/>
    <property type="evidence" value="ECO:0007669"/>
    <property type="project" value="UniProtKB-UniPathway"/>
</dbReference>
<dbReference type="CDD" id="cd23989">
    <property type="entry name" value="GT29_ST8SIA1"/>
    <property type="match status" value="1"/>
</dbReference>
<dbReference type="FunFam" id="3.90.1480.20:FF:000014">
    <property type="entry name" value="Alpha-N-acetylneuraminide alpha-2,8-sialyltransferase"/>
    <property type="match status" value="1"/>
</dbReference>
<dbReference type="Gene3D" id="3.90.1480.20">
    <property type="entry name" value="Glycosyl transferase family 29"/>
    <property type="match status" value="1"/>
</dbReference>
<dbReference type="InterPro" id="IPR001675">
    <property type="entry name" value="Glyco_trans_29"/>
</dbReference>
<dbReference type="InterPro" id="IPR050943">
    <property type="entry name" value="Glycosyltr_29_Sialyltrsf"/>
</dbReference>
<dbReference type="InterPro" id="IPR038578">
    <property type="entry name" value="GT29-like_sf"/>
</dbReference>
<dbReference type="InterPro" id="IPR012163">
    <property type="entry name" value="Sialyl_trans"/>
</dbReference>
<dbReference type="PANTHER" id="PTHR11987">
    <property type="entry name" value="ALPHA-2,8-SIALYLTRANSFERASE"/>
    <property type="match status" value="1"/>
</dbReference>
<dbReference type="PANTHER" id="PTHR11987:SF3">
    <property type="entry name" value="ALPHA-N-ACETYLNEURAMINIDE ALPHA-2,8-SIALYLTRANSFERASE"/>
    <property type="match status" value="1"/>
</dbReference>
<dbReference type="Pfam" id="PF00777">
    <property type="entry name" value="Glyco_transf_29"/>
    <property type="match status" value="1"/>
</dbReference>
<dbReference type="PIRSF" id="PIRSF005557">
    <property type="entry name" value="Sialyl_trans"/>
    <property type="match status" value="1"/>
</dbReference>
<gene>
    <name evidence="7" type="primary">St8sia1</name>
    <name type="synonym">Siat8</name>
    <name type="synonym">Siat8a</name>
</gene>
<sequence>MSPCGRALHTSRGAMAMLARKFPRTRLPVGASALCVVVLCWLYIFPVYRLPNEKEIVQGVLAQRTAWRTNQTSASLFRRQMEDCCDPAHLFAMTKMNSPMGKSLWYDGELLYSFTIDNSTYSLFPQATPFQLPLKKCAVVGNGGILKMSGCGRQIDEANFVMRCNLPPLSSEYTRDVGSKTQLVTANPSIIRQRFENLLWSRKKFVDNMKIYNHSYIYMPAFSMKTGTEPSLRVYYTLKDVGANQTVLFANPNFLRNIGKFWKSRGIHAKRLSTGLFLVSAALGLCEEVSIYGFWPFSVNMQGDPISHHYYDNVLPFSGYHAMPEEFLQLWYLHKIGALRMQLDPCEEPSPQPTS</sequence>
<keyword id="KW-1015">Disulfide bond</keyword>
<keyword id="KW-0325">Glycoprotein</keyword>
<keyword id="KW-0328">Glycosyltransferase</keyword>
<keyword id="KW-0333">Golgi apparatus</keyword>
<keyword id="KW-0444">Lipid biosynthesis</keyword>
<keyword id="KW-0443">Lipid metabolism</keyword>
<keyword id="KW-0472">Membrane</keyword>
<keyword id="KW-1185">Reference proteome</keyword>
<keyword id="KW-0735">Signal-anchor</keyword>
<keyword id="KW-0746">Sphingolipid metabolism</keyword>
<keyword id="KW-0808">Transferase</keyword>
<keyword id="KW-0812">Transmembrane</keyword>
<keyword id="KW-1133">Transmembrane helix</keyword>
<proteinExistence type="evidence at protein level"/>
<organism>
    <name type="scientific">Mus musculus</name>
    <name type="common">Mouse</name>
    <dbReference type="NCBI Taxonomy" id="10090"/>
    <lineage>
        <taxon>Eukaryota</taxon>
        <taxon>Metazoa</taxon>
        <taxon>Chordata</taxon>
        <taxon>Craniata</taxon>
        <taxon>Vertebrata</taxon>
        <taxon>Euteleostomi</taxon>
        <taxon>Mammalia</taxon>
        <taxon>Eutheria</taxon>
        <taxon>Euarchontoglires</taxon>
        <taxon>Glires</taxon>
        <taxon>Rodentia</taxon>
        <taxon>Myomorpha</taxon>
        <taxon>Muroidea</taxon>
        <taxon>Muridae</taxon>
        <taxon>Murinae</taxon>
        <taxon>Mus</taxon>
        <taxon>Mus</taxon>
    </lineage>
</organism>